<protein>
    <recommendedName>
        <fullName>Pyruvate synthase subunit PorB</fullName>
        <ecNumber>1.2.7.1</ecNumber>
    </recommendedName>
    <alternativeName>
        <fullName>Pyruvate oxidoreductase beta chain</fullName>
        <shortName>POR</shortName>
    </alternativeName>
    <alternativeName>
        <fullName>Pyruvic-ferredoxin oxidoreductase subunit beta</fullName>
    </alternativeName>
</protein>
<dbReference type="EC" id="1.2.7.1"/>
<dbReference type="EMBL" id="BA000001">
    <property type="protein sequence ID" value="BAA29776.1"/>
    <property type="status" value="ALT_INIT"/>
    <property type="molecule type" value="Genomic_DNA"/>
</dbReference>
<dbReference type="PIR" id="F71114">
    <property type="entry name" value="F71114"/>
</dbReference>
<dbReference type="RefSeq" id="WP_048053193.1">
    <property type="nucleotide sequence ID" value="NC_000961.1"/>
</dbReference>
<dbReference type="SMR" id="O58417"/>
<dbReference type="STRING" id="70601.gene:9377630"/>
<dbReference type="EnsemblBacteria" id="BAA29776">
    <property type="protein sequence ID" value="BAA29776"/>
    <property type="gene ID" value="BAA29776"/>
</dbReference>
<dbReference type="GeneID" id="1443012"/>
<dbReference type="KEGG" id="pho:PH0685"/>
<dbReference type="eggNOG" id="arCOG01601">
    <property type="taxonomic scope" value="Archaea"/>
</dbReference>
<dbReference type="OrthoDB" id="296931at2157"/>
<dbReference type="Proteomes" id="UP000000752">
    <property type="component" value="Chromosome"/>
</dbReference>
<dbReference type="GO" id="GO:0051539">
    <property type="term" value="F:4 iron, 4 sulfur cluster binding"/>
    <property type="evidence" value="ECO:0007669"/>
    <property type="project" value="UniProtKB-KW"/>
</dbReference>
<dbReference type="GO" id="GO:0046872">
    <property type="term" value="F:metal ion binding"/>
    <property type="evidence" value="ECO:0007669"/>
    <property type="project" value="UniProtKB-KW"/>
</dbReference>
<dbReference type="GO" id="GO:0019164">
    <property type="term" value="F:pyruvate synthase activity"/>
    <property type="evidence" value="ECO:0007669"/>
    <property type="project" value="UniProtKB-EC"/>
</dbReference>
<dbReference type="GO" id="GO:0030976">
    <property type="term" value="F:thiamine pyrophosphate binding"/>
    <property type="evidence" value="ECO:0007669"/>
    <property type="project" value="InterPro"/>
</dbReference>
<dbReference type="CDD" id="cd03376">
    <property type="entry name" value="TPP_PFOR_porB_like"/>
    <property type="match status" value="1"/>
</dbReference>
<dbReference type="Gene3D" id="3.40.50.970">
    <property type="match status" value="2"/>
</dbReference>
<dbReference type="InterPro" id="IPR051479">
    <property type="entry name" value="PorB-like"/>
</dbReference>
<dbReference type="InterPro" id="IPR029061">
    <property type="entry name" value="THDP-binding"/>
</dbReference>
<dbReference type="InterPro" id="IPR011766">
    <property type="entry name" value="TPP_enzyme_TPP-bd"/>
</dbReference>
<dbReference type="NCBIfam" id="NF008819">
    <property type="entry name" value="PRK11865.1"/>
    <property type="match status" value="1"/>
</dbReference>
<dbReference type="PANTHER" id="PTHR42897">
    <property type="entry name" value="PYRUVATE SYNTHASE SUBUNIT PORB"/>
    <property type="match status" value="1"/>
</dbReference>
<dbReference type="PANTHER" id="PTHR42897:SF2">
    <property type="entry name" value="PYRUVATE SYNTHASE SUBUNIT PORB"/>
    <property type="match status" value="1"/>
</dbReference>
<dbReference type="Pfam" id="PF02775">
    <property type="entry name" value="TPP_enzyme_C"/>
    <property type="match status" value="1"/>
</dbReference>
<dbReference type="SUPFAM" id="SSF52518">
    <property type="entry name" value="Thiamin diphosphate-binding fold (THDP-binding)"/>
    <property type="match status" value="1"/>
</dbReference>
<feature type="initiator methionine" description="Removed" evidence="1">
    <location>
        <position position="1"/>
    </location>
</feature>
<feature type="chain" id="PRO_0000099908" description="Pyruvate synthase subunit PorB">
    <location>
        <begin position="2"/>
        <end position="331"/>
    </location>
</feature>
<feature type="binding site" evidence="2">
    <location>
        <position position="21"/>
    </location>
    <ligand>
        <name>[4Fe-4S] cluster</name>
        <dbReference type="ChEBI" id="CHEBI:49883"/>
    </ligand>
</feature>
<feature type="binding site" evidence="2">
    <location>
        <position position="24"/>
    </location>
    <ligand>
        <name>[4Fe-4S] cluster</name>
        <dbReference type="ChEBI" id="CHEBI:49883"/>
    </ligand>
</feature>
<feature type="binding site" evidence="2">
    <location>
        <position position="59"/>
    </location>
    <ligand>
        <name>[4Fe-4S] cluster</name>
        <dbReference type="ChEBI" id="CHEBI:49883"/>
    </ligand>
</feature>
<feature type="binding site" evidence="2">
    <location>
        <position position="222"/>
    </location>
    <ligand>
        <name>[4Fe-4S] cluster</name>
        <dbReference type="ChEBI" id="CHEBI:49883"/>
    </ligand>
</feature>
<sequence length="331" mass="36119">MAVRKPPITTREYWAPGHAACAGCGCAIALKLATKAFSEAMEEKYGDPNAFAIAQATGCMEVVSAVFPYTAWKVPWIHVAFENAAAAASGVEAAWKKLGIKGKILAIGGDGGTADIGLQALSGMLERGHNVVYLMYDNEAYMNTGIQRSSSTPYGAWTTTSPPGKYSIGEDRPKKWVALIAAAHQIPYAATASIGNPFDLVKKVKKAAKVDGPAFIQVHCTCPTGWRTPLEKGVEIARLAIETGMWPLFEIENGDIWNIKIQPPGGGAKVYKEGGRVVRIEFKKPIEEYLKYQGRFKHLFKRPEAIEELRNQIKAMWKVLGVEAILPRPEE</sequence>
<comment type="catalytic activity">
    <reaction>
        <text>2 oxidized [2Fe-2S]-[ferredoxin] + pyruvate + CoA = 2 reduced [2Fe-2S]-[ferredoxin] + acetyl-CoA + CO2 + H(+)</text>
        <dbReference type="Rhea" id="RHEA:12765"/>
        <dbReference type="Rhea" id="RHEA-COMP:10000"/>
        <dbReference type="Rhea" id="RHEA-COMP:10001"/>
        <dbReference type="ChEBI" id="CHEBI:15361"/>
        <dbReference type="ChEBI" id="CHEBI:15378"/>
        <dbReference type="ChEBI" id="CHEBI:16526"/>
        <dbReference type="ChEBI" id="CHEBI:33737"/>
        <dbReference type="ChEBI" id="CHEBI:33738"/>
        <dbReference type="ChEBI" id="CHEBI:57287"/>
        <dbReference type="ChEBI" id="CHEBI:57288"/>
        <dbReference type="EC" id="1.2.7.1"/>
    </reaction>
</comment>
<comment type="cofactor">
    <cofactor evidence="2">
        <name>[4Fe-4S] cluster</name>
        <dbReference type="ChEBI" id="CHEBI:49883"/>
    </cofactor>
    <text evidence="2">Binds 1 [4Fe-4S] cluster per subunit.</text>
</comment>
<comment type="subunit">
    <text evidence="1">Heterotetramer of one alpha, one beta, one delta and one gamma chain.</text>
</comment>
<comment type="sequence caution" evidence="3">
    <conflict type="erroneous initiation">
        <sequence resource="EMBL-CDS" id="BAA29776"/>
    </conflict>
</comment>
<proteinExistence type="inferred from homology"/>
<accession>O58417</accession>
<organism>
    <name type="scientific">Pyrococcus horikoshii (strain ATCC 700860 / DSM 12428 / JCM 9974 / NBRC 100139 / OT-3)</name>
    <dbReference type="NCBI Taxonomy" id="70601"/>
    <lineage>
        <taxon>Archaea</taxon>
        <taxon>Methanobacteriati</taxon>
        <taxon>Methanobacteriota</taxon>
        <taxon>Thermococci</taxon>
        <taxon>Thermococcales</taxon>
        <taxon>Thermococcaceae</taxon>
        <taxon>Pyrococcus</taxon>
    </lineage>
</organism>
<gene>
    <name type="primary">porB</name>
    <name type="ordered locus">PH0685</name>
</gene>
<keyword id="KW-0004">4Fe-4S</keyword>
<keyword id="KW-0408">Iron</keyword>
<keyword id="KW-0411">Iron-sulfur</keyword>
<keyword id="KW-0479">Metal-binding</keyword>
<keyword id="KW-0560">Oxidoreductase</keyword>
<reference key="1">
    <citation type="journal article" date="1998" name="DNA Res.">
        <title>Complete sequence and gene organization of the genome of a hyper-thermophilic archaebacterium, Pyrococcus horikoshii OT3.</title>
        <authorList>
            <person name="Kawarabayasi Y."/>
            <person name="Sawada M."/>
            <person name="Horikawa H."/>
            <person name="Haikawa Y."/>
            <person name="Hino Y."/>
            <person name="Yamamoto S."/>
            <person name="Sekine M."/>
            <person name="Baba S."/>
            <person name="Kosugi H."/>
            <person name="Hosoyama A."/>
            <person name="Nagai Y."/>
            <person name="Sakai M."/>
            <person name="Ogura K."/>
            <person name="Otsuka R."/>
            <person name="Nakazawa H."/>
            <person name="Takamiya M."/>
            <person name="Ohfuku Y."/>
            <person name="Funahashi T."/>
            <person name="Tanaka T."/>
            <person name="Kudoh Y."/>
            <person name="Yamazaki J."/>
            <person name="Kushida N."/>
            <person name="Oguchi A."/>
            <person name="Aoki K."/>
            <person name="Yoshizawa T."/>
            <person name="Nakamura Y."/>
            <person name="Robb F.T."/>
            <person name="Horikoshi K."/>
            <person name="Masuchi Y."/>
            <person name="Shizuya H."/>
            <person name="Kikuchi H."/>
        </authorList>
    </citation>
    <scope>NUCLEOTIDE SEQUENCE [LARGE SCALE GENOMIC DNA]</scope>
    <source>
        <strain>ATCC 700860 / DSM 12428 / JCM 9974 / NBRC 100139 / OT-3</strain>
    </source>
</reference>
<name>PORB_PYRHO</name>
<evidence type="ECO:0000250" key="1"/>
<evidence type="ECO:0000250" key="2">
    <source>
        <dbReference type="UniProtKB" id="P94692"/>
    </source>
</evidence>
<evidence type="ECO:0000305" key="3"/>